<name>NQOR_BRUAB</name>
<dbReference type="EC" id="1.6.5.2" evidence="1"/>
<dbReference type="EMBL" id="AE017223">
    <property type="protein sequence ID" value="AAX74402.1"/>
    <property type="molecule type" value="Genomic_DNA"/>
</dbReference>
<dbReference type="SMR" id="Q57D82"/>
<dbReference type="DNASU" id="3787724"/>
<dbReference type="EnsemblBacteria" id="AAX74402">
    <property type="protein sequence ID" value="AAX74402"/>
    <property type="gene ID" value="BruAb1_1054"/>
</dbReference>
<dbReference type="KEGG" id="bmb:BruAb1_1054"/>
<dbReference type="HOGENOM" id="CLU_051402_0_2_5"/>
<dbReference type="Proteomes" id="UP000000540">
    <property type="component" value="Chromosome I"/>
</dbReference>
<dbReference type="GO" id="GO:0016020">
    <property type="term" value="C:membrane"/>
    <property type="evidence" value="ECO:0007669"/>
    <property type="project" value="TreeGrafter"/>
</dbReference>
<dbReference type="GO" id="GO:0050660">
    <property type="term" value="F:flavin adenine dinucleotide binding"/>
    <property type="evidence" value="ECO:0007669"/>
    <property type="project" value="UniProtKB-UniRule"/>
</dbReference>
<dbReference type="GO" id="GO:0010181">
    <property type="term" value="F:FMN binding"/>
    <property type="evidence" value="ECO:0007669"/>
    <property type="project" value="InterPro"/>
</dbReference>
<dbReference type="GO" id="GO:0051287">
    <property type="term" value="F:NAD binding"/>
    <property type="evidence" value="ECO:0007669"/>
    <property type="project" value="UniProtKB-UniRule"/>
</dbReference>
<dbReference type="GO" id="GO:0050136">
    <property type="term" value="F:NADH:ubiquinone reductase (non-electrogenic) activity"/>
    <property type="evidence" value="ECO:0007669"/>
    <property type="project" value="RHEA"/>
</dbReference>
<dbReference type="GO" id="GO:0050661">
    <property type="term" value="F:NADP binding"/>
    <property type="evidence" value="ECO:0007669"/>
    <property type="project" value="UniProtKB-UniRule"/>
</dbReference>
<dbReference type="GO" id="GO:0008753">
    <property type="term" value="F:NADPH dehydrogenase (quinone) activity"/>
    <property type="evidence" value="ECO:0007669"/>
    <property type="project" value="RHEA"/>
</dbReference>
<dbReference type="FunFam" id="3.40.50.360:FF:000001">
    <property type="entry name" value="NAD(P)H dehydrogenase (Quinone) FQR1-like"/>
    <property type="match status" value="1"/>
</dbReference>
<dbReference type="Gene3D" id="3.40.50.360">
    <property type="match status" value="1"/>
</dbReference>
<dbReference type="HAMAP" id="MF_01017">
    <property type="entry name" value="NQOR"/>
    <property type="match status" value="1"/>
</dbReference>
<dbReference type="InterPro" id="IPR008254">
    <property type="entry name" value="Flavodoxin/NO_synth"/>
</dbReference>
<dbReference type="InterPro" id="IPR029039">
    <property type="entry name" value="Flavoprotein-like_sf"/>
</dbReference>
<dbReference type="InterPro" id="IPR010089">
    <property type="entry name" value="Flavoprotein_WrbA-like"/>
</dbReference>
<dbReference type="InterPro" id="IPR005025">
    <property type="entry name" value="FMN_Rdtase-like_dom"/>
</dbReference>
<dbReference type="InterPro" id="IPR037513">
    <property type="entry name" value="NQO"/>
</dbReference>
<dbReference type="NCBIfam" id="TIGR01755">
    <property type="entry name" value="flav_wrbA"/>
    <property type="match status" value="1"/>
</dbReference>
<dbReference type="NCBIfam" id="NF002999">
    <property type="entry name" value="PRK03767.1"/>
    <property type="match status" value="1"/>
</dbReference>
<dbReference type="PANTHER" id="PTHR30546">
    <property type="entry name" value="FLAVODOXIN-RELATED PROTEIN WRBA-RELATED"/>
    <property type="match status" value="1"/>
</dbReference>
<dbReference type="PANTHER" id="PTHR30546:SF23">
    <property type="entry name" value="FLAVOPROTEIN-LIKE PROTEIN YCP4-RELATED"/>
    <property type="match status" value="1"/>
</dbReference>
<dbReference type="Pfam" id="PF03358">
    <property type="entry name" value="FMN_red"/>
    <property type="match status" value="1"/>
</dbReference>
<dbReference type="SUPFAM" id="SSF52218">
    <property type="entry name" value="Flavoproteins"/>
    <property type="match status" value="1"/>
</dbReference>
<dbReference type="PROSITE" id="PS50902">
    <property type="entry name" value="FLAVODOXIN_LIKE"/>
    <property type="match status" value="1"/>
</dbReference>
<reference key="1">
    <citation type="journal article" date="2005" name="J. Bacteriol.">
        <title>Completion of the genome sequence of Brucella abortus and comparison to the highly similar genomes of Brucella melitensis and Brucella suis.</title>
        <authorList>
            <person name="Halling S.M."/>
            <person name="Peterson-Burch B.D."/>
            <person name="Bricker B.J."/>
            <person name="Zuerner R.L."/>
            <person name="Qing Z."/>
            <person name="Li L.-L."/>
            <person name="Kapur V."/>
            <person name="Alt D.P."/>
            <person name="Olsen S.C."/>
        </authorList>
    </citation>
    <scope>NUCLEOTIDE SEQUENCE [LARGE SCALE GENOMIC DNA]</scope>
    <source>
        <strain>9-941</strain>
    </source>
</reference>
<gene>
    <name type="ordered locus">BruAb1_1054</name>
</gene>
<feature type="chain" id="PRO_0000291006" description="NAD(P)H dehydrogenase (quinone)">
    <location>
        <begin position="1"/>
        <end position="199"/>
    </location>
</feature>
<feature type="domain" description="Flavodoxin-like" evidence="1">
    <location>
        <begin position="4"/>
        <end position="190"/>
    </location>
</feature>
<feature type="region of interest" description="Disordered" evidence="2">
    <location>
        <begin position="158"/>
        <end position="181"/>
    </location>
</feature>
<feature type="compositionally biased region" description="Polar residues" evidence="2">
    <location>
        <begin position="163"/>
        <end position="177"/>
    </location>
</feature>
<feature type="binding site" evidence="1">
    <location>
        <begin position="10"/>
        <end position="15"/>
    </location>
    <ligand>
        <name>FMN</name>
        <dbReference type="ChEBI" id="CHEBI:58210"/>
    </ligand>
</feature>
<feature type="binding site" evidence="1">
    <location>
        <position position="12"/>
    </location>
    <ligand>
        <name>NAD(+)</name>
        <dbReference type="ChEBI" id="CHEBI:57540"/>
    </ligand>
</feature>
<feature type="binding site" evidence="1">
    <location>
        <begin position="78"/>
        <end position="80"/>
    </location>
    <ligand>
        <name>FMN</name>
        <dbReference type="ChEBI" id="CHEBI:58210"/>
    </ligand>
</feature>
<feature type="binding site" evidence="1">
    <location>
        <position position="98"/>
    </location>
    <ligand>
        <name>substrate</name>
    </ligand>
</feature>
<feature type="binding site" evidence="1">
    <location>
        <begin position="113"/>
        <end position="119"/>
    </location>
    <ligand>
        <name>FMN</name>
        <dbReference type="ChEBI" id="CHEBI:58210"/>
    </ligand>
</feature>
<feature type="binding site" evidence="1">
    <location>
        <position position="134"/>
    </location>
    <ligand>
        <name>FMN</name>
        <dbReference type="ChEBI" id="CHEBI:58210"/>
    </ligand>
</feature>
<proteinExistence type="inferred from homology"/>
<protein>
    <recommendedName>
        <fullName evidence="1">NAD(P)H dehydrogenase (quinone)</fullName>
        <ecNumber evidence="1">1.6.5.2</ecNumber>
    </recommendedName>
    <alternativeName>
        <fullName>Flavoprotein WrbA</fullName>
    </alternativeName>
    <alternativeName>
        <fullName evidence="1">NAD(P)H:quinone oxidoreductase</fullName>
        <shortName evidence="1">NQO</shortName>
    </alternativeName>
</protein>
<keyword id="KW-0285">Flavoprotein</keyword>
<keyword id="KW-0288">FMN</keyword>
<keyword id="KW-0520">NAD</keyword>
<keyword id="KW-0521">NADP</keyword>
<keyword id="KW-0547">Nucleotide-binding</keyword>
<keyword id="KW-0560">Oxidoreductase</keyword>
<comment type="catalytic activity">
    <reaction evidence="1">
        <text>a quinone + NADH + H(+) = a quinol + NAD(+)</text>
        <dbReference type="Rhea" id="RHEA:46160"/>
        <dbReference type="ChEBI" id="CHEBI:15378"/>
        <dbReference type="ChEBI" id="CHEBI:24646"/>
        <dbReference type="ChEBI" id="CHEBI:57540"/>
        <dbReference type="ChEBI" id="CHEBI:57945"/>
        <dbReference type="ChEBI" id="CHEBI:132124"/>
        <dbReference type="EC" id="1.6.5.2"/>
    </reaction>
</comment>
<comment type="catalytic activity">
    <reaction evidence="1">
        <text>a quinone + NADPH + H(+) = a quinol + NADP(+)</text>
        <dbReference type="Rhea" id="RHEA:46164"/>
        <dbReference type="ChEBI" id="CHEBI:15378"/>
        <dbReference type="ChEBI" id="CHEBI:24646"/>
        <dbReference type="ChEBI" id="CHEBI:57783"/>
        <dbReference type="ChEBI" id="CHEBI:58349"/>
        <dbReference type="ChEBI" id="CHEBI:132124"/>
        <dbReference type="EC" id="1.6.5.2"/>
    </reaction>
</comment>
<comment type="cofactor">
    <cofactor evidence="1">
        <name>FMN</name>
        <dbReference type="ChEBI" id="CHEBI:58210"/>
    </cofactor>
    <text evidence="1">Binds 1 FMN per monomer.</text>
</comment>
<comment type="similarity">
    <text evidence="1">Belongs to the WrbA family.</text>
</comment>
<sequence>MVKMLVLYYSAYGYMEQMAKAAAEGAREGGAEVTLKRVPELVPEEVAKASHYKIDQEVPIATPGELADYDAIIIGTATRYGMMASQMKNFLDQTGGLWAKGALINKVGSVMVSTATQHGGAELALISTQWQMQHHGMIIVPLSYAYREQMGNDVVRGGAPYGMTTTADGDGSRQPSAQELDGARFQGRRVAEITAKLHG</sequence>
<organism>
    <name type="scientific">Brucella abortus biovar 1 (strain 9-941)</name>
    <dbReference type="NCBI Taxonomy" id="262698"/>
    <lineage>
        <taxon>Bacteria</taxon>
        <taxon>Pseudomonadati</taxon>
        <taxon>Pseudomonadota</taxon>
        <taxon>Alphaproteobacteria</taxon>
        <taxon>Hyphomicrobiales</taxon>
        <taxon>Brucellaceae</taxon>
        <taxon>Brucella/Ochrobactrum group</taxon>
        <taxon>Brucella</taxon>
    </lineage>
</organism>
<accession>Q57D82</accession>
<evidence type="ECO:0000255" key="1">
    <source>
        <dbReference type="HAMAP-Rule" id="MF_01017"/>
    </source>
</evidence>
<evidence type="ECO:0000256" key="2">
    <source>
        <dbReference type="SAM" id="MobiDB-lite"/>
    </source>
</evidence>